<evidence type="ECO:0000255" key="1">
    <source>
        <dbReference type="HAMAP-Rule" id="MF_00435"/>
    </source>
</evidence>
<evidence type="ECO:0000255" key="2">
    <source>
        <dbReference type="PROSITE-ProRule" id="PRU01197"/>
    </source>
</evidence>
<evidence type="ECO:0000255" key="3">
    <source>
        <dbReference type="PROSITE-ProRule" id="PRU01198"/>
    </source>
</evidence>
<gene>
    <name evidence="1" type="primary">ilvC</name>
    <name type="ordered locus">NP_2198A</name>
</gene>
<reference key="1">
    <citation type="journal article" date="2005" name="Genome Res.">
        <title>Living with two extremes: conclusions from the genome sequence of Natronomonas pharaonis.</title>
        <authorList>
            <person name="Falb M."/>
            <person name="Pfeiffer F."/>
            <person name="Palm P."/>
            <person name="Rodewald K."/>
            <person name="Hickmann V."/>
            <person name="Tittor J."/>
            <person name="Oesterhelt D."/>
        </authorList>
    </citation>
    <scope>NUCLEOTIDE SEQUENCE [LARGE SCALE GENOMIC DNA]</scope>
    <source>
        <strain>ATCC 35678 / DSM 2160 / CIP 103997 / JCM 8858 / NBRC 14720 / NCIMB 2260 / Gabara</strain>
    </source>
</reference>
<keyword id="KW-0028">Amino-acid biosynthesis</keyword>
<keyword id="KW-0100">Branched-chain amino acid biosynthesis</keyword>
<keyword id="KW-0460">Magnesium</keyword>
<keyword id="KW-0479">Metal-binding</keyword>
<keyword id="KW-0521">NADP</keyword>
<keyword id="KW-0560">Oxidoreductase</keyword>
<keyword id="KW-1185">Reference proteome</keyword>
<sequence length="331" mass="35966">MTDATIYYDDDAESTVLDDKTVAVLGYGSQGHAHAQNLDDSGVDVVVGLREDSSSRSAAEADGLDVATPRGAAEQADLVSVLVPDTVQPAVYEQIEDVLQPGDTLQFAHGFNIHYGQIEPSEDVNVTMVAPKSPGHLVRRNYENDEGTPGLLAVYQDPSGEAHDLGLAYAKAIGCTRAGVVETTFREETETDLFGEQAVLCGGVTSLVKTGYETLVDAGYSPEMAYFECLNELKLIVDLMYEGGNSEMWDSVSDTAEYGGLTRGDRIVDDHAREKMEEVLEEVQNGTFAREWISENQAGRPSYKQLRAAEKNHDIEAVGEDLRALFAWGDD</sequence>
<proteinExistence type="inferred from homology"/>
<feature type="chain" id="PRO_0000226218" description="Ketol-acid reductoisomerase (NADP(+))">
    <location>
        <begin position="1"/>
        <end position="331"/>
    </location>
</feature>
<feature type="domain" description="KARI N-terminal Rossmann" evidence="2">
    <location>
        <begin position="4"/>
        <end position="183"/>
    </location>
</feature>
<feature type="domain" description="KARI C-terminal knotted" evidence="3">
    <location>
        <begin position="184"/>
        <end position="329"/>
    </location>
</feature>
<feature type="active site" evidence="1">
    <location>
        <position position="109"/>
    </location>
</feature>
<feature type="binding site" evidence="1">
    <location>
        <begin position="27"/>
        <end position="30"/>
    </location>
    <ligand>
        <name>NADP(+)</name>
        <dbReference type="ChEBI" id="CHEBI:58349"/>
    </ligand>
</feature>
<feature type="binding site" evidence="1">
    <location>
        <position position="50"/>
    </location>
    <ligand>
        <name>NADP(+)</name>
        <dbReference type="ChEBI" id="CHEBI:58349"/>
    </ligand>
</feature>
<feature type="binding site" evidence="1">
    <location>
        <position position="53"/>
    </location>
    <ligand>
        <name>NADP(+)</name>
        <dbReference type="ChEBI" id="CHEBI:58349"/>
    </ligand>
</feature>
<feature type="binding site" evidence="1">
    <location>
        <position position="55"/>
    </location>
    <ligand>
        <name>NADP(+)</name>
        <dbReference type="ChEBI" id="CHEBI:58349"/>
    </ligand>
</feature>
<feature type="binding site" evidence="1">
    <location>
        <begin position="85"/>
        <end position="88"/>
    </location>
    <ligand>
        <name>NADP(+)</name>
        <dbReference type="ChEBI" id="CHEBI:58349"/>
    </ligand>
</feature>
<feature type="binding site" evidence="1">
    <location>
        <position position="135"/>
    </location>
    <ligand>
        <name>NADP(+)</name>
        <dbReference type="ChEBI" id="CHEBI:58349"/>
    </ligand>
</feature>
<feature type="binding site" evidence="1">
    <location>
        <position position="192"/>
    </location>
    <ligand>
        <name>Mg(2+)</name>
        <dbReference type="ChEBI" id="CHEBI:18420"/>
        <label>1</label>
    </ligand>
</feature>
<feature type="binding site" evidence="1">
    <location>
        <position position="192"/>
    </location>
    <ligand>
        <name>Mg(2+)</name>
        <dbReference type="ChEBI" id="CHEBI:18420"/>
        <label>2</label>
    </ligand>
</feature>
<feature type="binding site" evidence="1">
    <location>
        <position position="196"/>
    </location>
    <ligand>
        <name>Mg(2+)</name>
        <dbReference type="ChEBI" id="CHEBI:18420"/>
        <label>1</label>
    </ligand>
</feature>
<feature type="binding site" evidence="1">
    <location>
        <position position="228"/>
    </location>
    <ligand>
        <name>Mg(2+)</name>
        <dbReference type="ChEBI" id="CHEBI:18420"/>
        <label>2</label>
    </ligand>
</feature>
<feature type="binding site" evidence="1">
    <location>
        <position position="232"/>
    </location>
    <ligand>
        <name>Mg(2+)</name>
        <dbReference type="ChEBI" id="CHEBI:18420"/>
        <label>2</label>
    </ligand>
</feature>
<feature type="binding site" evidence="1">
    <location>
        <position position="253"/>
    </location>
    <ligand>
        <name>substrate</name>
    </ligand>
</feature>
<organism>
    <name type="scientific">Natronomonas pharaonis (strain ATCC 35678 / DSM 2160 / CIP 103997 / JCM 8858 / NBRC 14720 / NCIMB 2260 / Gabara)</name>
    <name type="common">Halobacterium pharaonis</name>
    <dbReference type="NCBI Taxonomy" id="348780"/>
    <lineage>
        <taxon>Archaea</taxon>
        <taxon>Methanobacteriati</taxon>
        <taxon>Methanobacteriota</taxon>
        <taxon>Stenosarchaea group</taxon>
        <taxon>Halobacteria</taxon>
        <taxon>Halobacteriales</taxon>
        <taxon>Haloarculaceae</taxon>
        <taxon>Natronomonas</taxon>
    </lineage>
</organism>
<name>ILVC_NATPD</name>
<protein>
    <recommendedName>
        <fullName evidence="1">Ketol-acid reductoisomerase (NADP(+))</fullName>
        <shortName evidence="1">KARI</shortName>
        <ecNumber evidence="1">1.1.1.86</ecNumber>
    </recommendedName>
    <alternativeName>
        <fullName evidence="1">Acetohydroxy-acid isomeroreductase</fullName>
        <shortName evidence="1">AHIR</shortName>
    </alternativeName>
    <alternativeName>
        <fullName evidence="1">Alpha-keto-beta-hydroxylacyl reductoisomerase</fullName>
    </alternativeName>
    <alternativeName>
        <fullName evidence="1">Ketol-acid reductoisomerase type 1</fullName>
    </alternativeName>
    <alternativeName>
        <fullName evidence="1">Ketol-acid reductoisomerase type I</fullName>
    </alternativeName>
</protein>
<comment type="function">
    <text evidence="1">Involved in the biosynthesis of branched-chain amino acids (BCAA). Catalyzes an alkyl-migration followed by a ketol-acid reduction of (S)-2-acetolactate (S2AL) to yield (R)-2,3-dihydroxy-isovalerate. In the isomerase reaction, S2AL is rearranged via a Mg-dependent methyl migration to produce 3-hydroxy-3-methyl-2-ketobutyrate (HMKB). In the reductase reaction, this 2-ketoacid undergoes a metal-dependent reduction by NADPH to yield (R)-2,3-dihydroxy-isovalerate.</text>
</comment>
<comment type="catalytic activity">
    <reaction evidence="1">
        <text>(2R)-2,3-dihydroxy-3-methylbutanoate + NADP(+) = (2S)-2-acetolactate + NADPH + H(+)</text>
        <dbReference type="Rhea" id="RHEA:22068"/>
        <dbReference type="ChEBI" id="CHEBI:15378"/>
        <dbReference type="ChEBI" id="CHEBI:49072"/>
        <dbReference type="ChEBI" id="CHEBI:57783"/>
        <dbReference type="ChEBI" id="CHEBI:58349"/>
        <dbReference type="ChEBI" id="CHEBI:58476"/>
        <dbReference type="EC" id="1.1.1.86"/>
    </reaction>
</comment>
<comment type="catalytic activity">
    <reaction evidence="1">
        <text>(2R,3R)-2,3-dihydroxy-3-methylpentanoate + NADP(+) = (S)-2-ethyl-2-hydroxy-3-oxobutanoate + NADPH + H(+)</text>
        <dbReference type="Rhea" id="RHEA:13493"/>
        <dbReference type="ChEBI" id="CHEBI:15378"/>
        <dbReference type="ChEBI" id="CHEBI:49256"/>
        <dbReference type="ChEBI" id="CHEBI:49258"/>
        <dbReference type="ChEBI" id="CHEBI:57783"/>
        <dbReference type="ChEBI" id="CHEBI:58349"/>
        <dbReference type="EC" id="1.1.1.86"/>
    </reaction>
</comment>
<comment type="cofactor">
    <cofactor evidence="1">
        <name>Mg(2+)</name>
        <dbReference type="ChEBI" id="CHEBI:18420"/>
    </cofactor>
    <text evidence="1">Binds 2 magnesium ions per subunit.</text>
</comment>
<comment type="pathway">
    <text evidence="1">Amino-acid biosynthesis; L-isoleucine biosynthesis; L-isoleucine from 2-oxobutanoate: step 2/4.</text>
</comment>
<comment type="pathway">
    <text evidence="1">Amino-acid biosynthesis; L-valine biosynthesis; L-valine from pyruvate: step 2/4.</text>
</comment>
<comment type="similarity">
    <text evidence="1">Belongs to the ketol-acid reductoisomerase family.</text>
</comment>
<dbReference type="EC" id="1.1.1.86" evidence="1"/>
<dbReference type="EMBL" id="CR936257">
    <property type="protein sequence ID" value="CAI49190.1"/>
    <property type="molecule type" value="Genomic_DNA"/>
</dbReference>
<dbReference type="RefSeq" id="WP_011322818.1">
    <property type="nucleotide sequence ID" value="NC_007426.1"/>
</dbReference>
<dbReference type="SMR" id="Q3IRQ2"/>
<dbReference type="STRING" id="348780.NP_2198A"/>
<dbReference type="EnsemblBacteria" id="CAI49190">
    <property type="protein sequence ID" value="CAI49190"/>
    <property type="gene ID" value="NP_2198A"/>
</dbReference>
<dbReference type="GeneID" id="3702867"/>
<dbReference type="KEGG" id="nph:NP_2198A"/>
<dbReference type="eggNOG" id="arCOG04465">
    <property type="taxonomic scope" value="Archaea"/>
</dbReference>
<dbReference type="HOGENOM" id="CLU_033821_0_1_2"/>
<dbReference type="OrthoDB" id="6064at2157"/>
<dbReference type="UniPathway" id="UPA00047">
    <property type="reaction ID" value="UER00056"/>
</dbReference>
<dbReference type="UniPathway" id="UPA00049">
    <property type="reaction ID" value="UER00060"/>
</dbReference>
<dbReference type="Proteomes" id="UP000002698">
    <property type="component" value="Chromosome"/>
</dbReference>
<dbReference type="GO" id="GO:0005829">
    <property type="term" value="C:cytosol"/>
    <property type="evidence" value="ECO:0007669"/>
    <property type="project" value="TreeGrafter"/>
</dbReference>
<dbReference type="GO" id="GO:0004455">
    <property type="term" value="F:ketol-acid reductoisomerase activity"/>
    <property type="evidence" value="ECO:0007669"/>
    <property type="project" value="UniProtKB-UniRule"/>
</dbReference>
<dbReference type="GO" id="GO:0000287">
    <property type="term" value="F:magnesium ion binding"/>
    <property type="evidence" value="ECO:0007669"/>
    <property type="project" value="UniProtKB-UniRule"/>
</dbReference>
<dbReference type="GO" id="GO:0050661">
    <property type="term" value="F:NADP binding"/>
    <property type="evidence" value="ECO:0007669"/>
    <property type="project" value="InterPro"/>
</dbReference>
<dbReference type="GO" id="GO:0009097">
    <property type="term" value="P:isoleucine biosynthetic process"/>
    <property type="evidence" value="ECO:0007669"/>
    <property type="project" value="UniProtKB-UniRule"/>
</dbReference>
<dbReference type="GO" id="GO:0009099">
    <property type="term" value="P:L-valine biosynthetic process"/>
    <property type="evidence" value="ECO:0007669"/>
    <property type="project" value="UniProtKB-UniRule"/>
</dbReference>
<dbReference type="FunFam" id="3.40.50.720:FF:000023">
    <property type="entry name" value="Ketol-acid reductoisomerase (NADP(+))"/>
    <property type="match status" value="1"/>
</dbReference>
<dbReference type="Gene3D" id="6.10.240.10">
    <property type="match status" value="1"/>
</dbReference>
<dbReference type="Gene3D" id="3.40.50.720">
    <property type="entry name" value="NAD(P)-binding Rossmann-like Domain"/>
    <property type="match status" value="1"/>
</dbReference>
<dbReference type="HAMAP" id="MF_00435">
    <property type="entry name" value="IlvC"/>
    <property type="match status" value="1"/>
</dbReference>
<dbReference type="InterPro" id="IPR008927">
    <property type="entry name" value="6-PGluconate_DH-like_C_sf"/>
</dbReference>
<dbReference type="InterPro" id="IPR013023">
    <property type="entry name" value="KARI"/>
</dbReference>
<dbReference type="InterPro" id="IPR000506">
    <property type="entry name" value="KARI_C"/>
</dbReference>
<dbReference type="InterPro" id="IPR013116">
    <property type="entry name" value="KARI_N"/>
</dbReference>
<dbReference type="InterPro" id="IPR014359">
    <property type="entry name" value="KARI_prok"/>
</dbReference>
<dbReference type="InterPro" id="IPR036291">
    <property type="entry name" value="NAD(P)-bd_dom_sf"/>
</dbReference>
<dbReference type="NCBIfam" id="TIGR00465">
    <property type="entry name" value="ilvC"/>
    <property type="match status" value="1"/>
</dbReference>
<dbReference type="NCBIfam" id="NF004017">
    <property type="entry name" value="PRK05479.1"/>
    <property type="match status" value="1"/>
</dbReference>
<dbReference type="NCBIfam" id="NF009940">
    <property type="entry name" value="PRK13403.1"/>
    <property type="match status" value="1"/>
</dbReference>
<dbReference type="PANTHER" id="PTHR21371">
    <property type="entry name" value="KETOL-ACID REDUCTOISOMERASE, MITOCHONDRIAL"/>
    <property type="match status" value="1"/>
</dbReference>
<dbReference type="PANTHER" id="PTHR21371:SF1">
    <property type="entry name" value="KETOL-ACID REDUCTOISOMERASE, MITOCHONDRIAL"/>
    <property type="match status" value="1"/>
</dbReference>
<dbReference type="Pfam" id="PF01450">
    <property type="entry name" value="KARI_C"/>
    <property type="match status" value="1"/>
</dbReference>
<dbReference type="Pfam" id="PF07991">
    <property type="entry name" value="KARI_N"/>
    <property type="match status" value="1"/>
</dbReference>
<dbReference type="PIRSF" id="PIRSF000116">
    <property type="entry name" value="IlvC_gammaproteo"/>
    <property type="match status" value="1"/>
</dbReference>
<dbReference type="SUPFAM" id="SSF48179">
    <property type="entry name" value="6-phosphogluconate dehydrogenase C-terminal domain-like"/>
    <property type="match status" value="1"/>
</dbReference>
<dbReference type="SUPFAM" id="SSF51735">
    <property type="entry name" value="NAD(P)-binding Rossmann-fold domains"/>
    <property type="match status" value="1"/>
</dbReference>
<dbReference type="PROSITE" id="PS51851">
    <property type="entry name" value="KARI_C"/>
    <property type="match status" value="1"/>
</dbReference>
<dbReference type="PROSITE" id="PS51850">
    <property type="entry name" value="KARI_N"/>
    <property type="match status" value="1"/>
</dbReference>
<accession>Q3IRQ2</accession>